<protein>
    <recommendedName>
        <fullName evidence="1">Dual-specificity RNA methyltransferase RlmN</fullName>
        <ecNumber evidence="1">2.1.1.192</ecNumber>
    </recommendedName>
    <alternativeName>
        <fullName evidence="1">23S rRNA (adenine(2503)-C(2))-methyltransferase</fullName>
    </alternativeName>
    <alternativeName>
        <fullName evidence="1">23S rRNA m2A2503 methyltransferase</fullName>
    </alternativeName>
    <alternativeName>
        <fullName evidence="1">Ribosomal RNA large subunit methyltransferase N</fullName>
    </alternativeName>
    <alternativeName>
        <fullName evidence="1">tRNA (adenine(37)-C(2))-methyltransferase</fullName>
    </alternativeName>
    <alternativeName>
        <fullName evidence="1">tRNA m2A37 methyltransferase</fullName>
    </alternativeName>
</protein>
<proteinExistence type="inferred from homology"/>
<organism>
    <name type="scientific">Campylobacter fetus subsp. fetus (strain 82-40)</name>
    <dbReference type="NCBI Taxonomy" id="360106"/>
    <lineage>
        <taxon>Bacteria</taxon>
        <taxon>Pseudomonadati</taxon>
        <taxon>Campylobacterota</taxon>
        <taxon>Epsilonproteobacteria</taxon>
        <taxon>Campylobacterales</taxon>
        <taxon>Campylobacteraceae</taxon>
        <taxon>Campylobacter</taxon>
    </lineage>
</organism>
<reference key="1">
    <citation type="submission" date="2006-11" db="EMBL/GenBank/DDBJ databases">
        <title>Sequence of Campylobacter fetus subsp. fetus 82-40.</title>
        <authorList>
            <person name="Fouts D.E."/>
            <person name="Nelson K.E."/>
        </authorList>
    </citation>
    <scope>NUCLEOTIDE SEQUENCE [LARGE SCALE GENOMIC DNA]</scope>
    <source>
        <strain>82-40</strain>
    </source>
</reference>
<accession>A0RRU0</accession>
<comment type="function">
    <text evidence="1">Specifically methylates position 2 of adenine 2503 in 23S rRNA and position 2 of adenine 37 in tRNAs. m2A2503 modification seems to play a crucial role in the proofreading step occurring at the peptidyl transferase center and thus would serve to optimize ribosomal fidelity.</text>
</comment>
<comment type="catalytic activity">
    <reaction evidence="1">
        <text>adenosine(2503) in 23S rRNA + 2 reduced [2Fe-2S]-[ferredoxin] + 2 S-adenosyl-L-methionine = 2-methyladenosine(2503) in 23S rRNA + 5'-deoxyadenosine + L-methionine + 2 oxidized [2Fe-2S]-[ferredoxin] + S-adenosyl-L-homocysteine</text>
        <dbReference type="Rhea" id="RHEA:42916"/>
        <dbReference type="Rhea" id="RHEA-COMP:10000"/>
        <dbReference type="Rhea" id="RHEA-COMP:10001"/>
        <dbReference type="Rhea" id="RHEA-COMP:10152"/>
        <dbReference type="Rhea" id="RHEA-COMP:10282"/>
        <dbReference type="ChEBI" id="CHEBI:17319"/>
        <dbReference type="ChEBI" id="CHEBI:33737"/>
        <dbReference type="ChEBI" id="CHEBI:33738"/>
        <dbReference type="ChEBI" id="CHEBI:57844"/>
        <dbReference type="ChEBI" id="CHEBI:57856"/>
        <dbReference type="ChEBI" id="CHEBI:59789"/>
        <dbReference type="ChEBI" id="CHEBI:74411"/>
        <dbReference type="ChEBI" id="CHEBI:74497"/>
        <dbReference type="EC" id="2.1.1.192"/>
    </reaction>
</comment>
<comment type="catalytic activity">
    <reaction evidence="1">
        <text>adenosine(37) in tRNA + 2 reduced [2Fe-2S]-[ferredoxin] + 2 S-adenosyl-L-methionine = 2-methyladenosine(37) in tRNA + 5'-deoxyadenosine + L-methionine + 2 oxidized [2Fe-2S]-[ferredoxin] + S-adenosyl-L-homocysteine</text>
        <dbReference type="Rhea" id="RHEA:43332"/>
        <dbReference type="Rhea" id="RHEA-COMP:10000"/>
        <dbReference type="Rhea" id="RHEA-COMP:10001"/>
        <dbReference type="Rhea" id="RHEA-COMP:10162"/>
        <dbReference type="Rhea" id="RHEA-COMP:10485"/>
        <dbReference type="ChEBI" id="CHEBI:17319"/>
        <dbReference type="ChEBI" id="CHEBI:33737"/>
        <dbReference type="ChEBI" id="CHEBI:33738"/>
        <dbReference type="ChEBI" id="CHEBI:57844"/>
        <dbReference type="ChEBI" id="CHEBI:57856"/>
        <dbReference type="ChEBI" id="CHEBI:59789"/>
        <dbReference type="ChEBI" id="CHEBI:74411"/>
        <dbReference type="ChEBI" id="CHEBI:74497"/>
        <dbReference type="EC" id="2.1.1.192"/>
    </reaction>
</comment>
<comment type="cofactor">
    <cofactor evidence="1">
        <name>[4Fe-4S] cluster</name>
        <dbReference type="ChEBI" id="CHEBI:49883"/>
    </cofactor>
    <text evidence="1">Binds 1 [4Fe-4S] cluster. The cluster is coordinated with 3 cysteines and an exchangeable S-adenosyl-L-methionine.</text>
</comment>
<comment type="subcellular location">
    <subcellularLocation>
        <location evidence="1">Cytoplasm</location>
    </subcellularLocation>
</comment>
<comment type="miscellaneous">
    <text evidence="1">Reaction proceeds by a ping-pong mechanism involving intermediate methylation of a conserved cysteine residue.</text>
</comment>
<comment type="similarity">
    <text evidence="1">Belongs to the radical SAM superfamily. RlmN family.</text>
</comment>
<feature type="chain" id="PRO_0000350092" description="Dual-specificity RNA methyltransferase RlmN">
    <location>
        <begin position="1"/>
        <end position="354"/>
    </location>
</feature>
<feature type="domain" description="Radical SAM core" evidence="2">
    <location>
        <begin position="105"/>
        <end position="338"/>
    </location>
</feature>
<feature type="active site" description="Proton acceptor" evidence="1">
    <location>
        <position position="86"/>
    </location>
</feature>
<feature type="active site" description="S-methylcysteine intermediate" evidence="1">
    <location>
        <position position="343"/>
    </location>
</feature>
<feature type="binding site" evidence="1">
    <location>
        <position position="119"/>
    </location>
    <ligand>
        <name>[4Fe-4S] cluster</name>
        <dbReference type="ChEBI" id="CHEBI:49883"/>
        <note>4Fe-4S-S-AdoMet</note>
    </ligand>
</feature>
<feature type="binding site" evidence="1">
    <location>
        <position position="123"/>
    </location>
    <ligand>
        <name>[4Fe-4S] cluster</name>
        <dbReference type="ChEBI" id="CHEBI:49883"/>
        <note>4Fe-4S-S-AdoMet</note>
    </ligand>
</feature>
<feature type="binding site" evidence="1">
    <location>
        <position position="126"/>
    </location>
    <ligand>
        <name>[4Fe-4S] cluster</name>
        <dbReference type="ChEBI" id="CHEBI:49883"/>
        <note>4Fe-4S-S-AdoMet</note>
    </ligand>
</feature>
<feature type="binding site" evidence="1">
    <location>
        <begin position="169"/>
        <end position="170"/>
    </location>
    <ligand>
        <name>S-adenosyl-L-methionine</name>
        <dbReference type="ChEBI" id="CHEBI:59789"/>
    </ligand>
</feature>
<feature type="binding site" evidence="1">
    <location>
        <position position="201"/>
    </location>
    <ligand>
        <name>S-adenosyl-L-methionine</name>
        <dbReference type="ChEBI" id="CHEBI:59789"/>
    </ligand>
</feature>
<feature type="binding site" evidence="1">
    <location>
        <begin position="224"/>
        <end position="226"/>
    </location>
    <ligand>
        <name>S-adenosyl-L-methionine</name>
        <dbReference type="ChEBI" id="CHEBI:59789"/>
    </ligand>
</feature>
<feature type="binding site" evidence="1">
    <location>
        <position position="300"/>
    </location>
    <ligand>
        <name>S-adenosyl-L-methionine</name>
        <dbReference type="ChEBI" id="CHEBI:59789"/>
    </ligand>
</feature>
<feature type="disulfide bond" description="(transient)" evidence="1">
    <location>
        <begin position="112"/>
        <end position="343"/>
    </location>
</feature>
<evidence type="ECO:0000255" key="1">
    <source>
        <dbReference type="HAMAP-Rule" id="MF_01849"/>
    </source>
</evidence>
<evidence type="ECO:0000255" key="2">
    <source>
        <dbReference type="PROSITE-ProRule" id="PRU01266"/>
    </source>
</evidence>
<dbReference type="EC" id="2.1.1.192" evidence="1"/>
<dbReference type="EMBL" id="CP000487">
    <property type="protein sequence ID" value="ABK83380.1"/>
    <property type="molecule type" value="Genomic_DNA"/>
</dbReference>
<dbReference type="RefSeq" id="WP_002847889.1">
    <property type="nucleotide sequence ID" value="NC_008599.1"/>
</dbReference>
<dbReference type="SMR" id="A0RRU0"/>
<dbReference type="GeneID" id="61065625"/>
<dbReference type="KEGG" id="cff:CFF8240_1816"/>
<dbReference type="eggNOG" id="COG0820">
    <property type="taxonomic scope" value="Bacteria"/>
</dbReference>
<dbReference type="HOGENOM" id="CLU_029101_2_0_7"/>
<dbReference type="Proteomes" id="UP000000760">
    <property type="component" value="Chromosome"/>
</dbReference>
<dbReference type="GO" id="GO:0005737">
    <property type="term" value="C:cytoplasm"/>
    <property type="evidence" value="ECO:0007669"/>
    <property type="project" value="UniProtKB-SubCell"/>
</dbReference>
<dbReference type="GO" id="GO:0051539">
    <property type="term" value="F:4 iron, 4 sulfur cluster binding"/>
    <property type="evidence" value="ECO:0007669"/>
    <property type="project" value="UniProtKB-UniRule"/>
</dbReference>
<dbReference type="GO" id="GO:0046872">
    <property type="term" value="F:metal ion binding"/>
    <property type="evidence" value="ECO:0007669"/>
    <property type="project" value="UniProtKB-KW"/>
</dbReference>
<dbReference type="GO" id="GO:0070040">
    <property type="term" value="F:rRNA (adenine(2503)-C2-)-methyltransferase activity"/>
    <property type="evidence" value="ECO:0007669"/>
    <property type="project" value="UniProtKB-UniRule"/>
</dbReference>
<dbReference type="GO" id="GO:0019843">
    <property type="term" value="F:rRNA binding"/>
    <property type="evidence" value="ECO:0007669"/>
    <property type="project" value="UniProtKB-UniRule"/>
</dbReference>
<dbReference type="GO" id="GO:0002935">
    <property type="term" value="F:tRNA (adenine(37)-C2)-methyltransferase activity"/>
    <property type="evidence" value="ECO:0007669"/>
    <property type="project" value="UniProtKB-UniRule"/>
</dbReference>
<dbReference type="GO" id="GO:0000049">
    <property type="term" value="F:tRNA binding"/>
    <property type="evidence" value="ECO:0007669"/>
    <property type="project" value="UniProtKB-UniRule"/>
</dbReference>
<dbReference type="GO" id="GO:0070475">
    <property type="term" value="P:rRNA base methylation"/>
    <property type="evidence" value="ECO:0007669"/>
    <property type="project" value="UniProtKB-UniRule"/>
</dbReference>
<dbReference type="GO" id="GO:0030488">
    <property type="term" value="P:tRNA methylation"/>
    <property type="evidence" value="ECO:0007669"/>
    <property type="project" value="UniProtKB-UniRule"/>
</dbReference>
<dbReference type="CDD" id="cd01335">
    <property type="entry name" value="Radical_SAM"/>
    <property type="match status" value="1"/>
</dbReference>
<dbReference type="FunFam" id="3.20.20.70:FF:000014">
    <property type="entry name" value="Probable dual-specificity RNA methyltransferase RlmN"/>
    <property type="match status" value="1"/>
</dbReference>
<dbReference type="Gene3D" id="1.10.150.530">
    <property type="match status" value="1"/>
</dbReference>
<dbReference type="Gene3D" id="3.20.20.70">
    <property type="entry name" value="Aldolase class I"/>
    <property type="match status" value="1"/>
</dbReference>
<dbReference type="HAMAP" id="MF_01849">
    <property type="entry name" value="RNA_methyltr_RlmN"/>
    <property type="match status" value="1"/>
</dbReference>
<dbReference type="InterPro" id="IPR013785">
    <property type="entry name" value="Aldolase_TIM"/>
</dbReference>
<dbReference type="InterPro" id="IPR040072">
    <property type="entry name" value="Methyltransferase_A"/>
</dbReference>
<dbReference type="InterPro" id="IPR048641">
    <property type="entry name" value="RlmN_N"/>
</dbReference>
<dbReference type="InterPro" id="IPR027492">
    <property type="entry name" value="RNA_MTrfase_RlmN"/>
</dbReference>
<dbReference type="InterPro" id="IPR004383">
    <property type="entry name" value="rRNA_lsu_MTrfase_RlmN/Cfr"/>
</dbReference>
<dbReference type="InterPro" id="IPR007197">
    <property type="entry name" value="rSAM"/>
</dbReference>
<dbReference type="NCBIfam" id="TIGR00048">
    <property type="entry name" value="rRNA_mod_RlmN"/>
    <property type="match status" value="1"/>
</dbReference>
<dbReference type="PANTHER" id="PTHR30544">
    <property type="entry name" value="23S RRNA METHYLTRANSFERASE"/>
    <property type="match status" value="1"/>
</dbReference>
<dbReference type="PANTHER" id="PTHR30544:SF5">
    <property type="entry name" value="RADICAL SAM CORE DOMAIN-CONTAINING PROTEIN"/>
    <property type="match status" value="1"/>
</dbReference>
<dbReference type="Pfam" id="PF04055">
    <property type="entry name" value="Radical_SAM"/>
    <property type="match status" value="1"/>
</dbReference>
<dbReference type="Pfam" id="PF21016">
    <property type="entry name" value="RlmN_N"/>
    <property type="match status" value="1"/>
</dbReference>
<dbReference type="PIRSF" id="PIRSF006004">
    <property type="entry name" value="CHP00048"/>
    <property type="match status" value="1"/>
</dbReference>
<dbReference type="SFLD" id="SFLDF00275">
    <property type="entry name" value="adenosine_C2_methyltransferase"/>
    <property type="match status" value="1"/>
</dbReference>
<dbReference type="SFLD" id="SFLDG01062">
    <property type="entry name" value="methyltransferase_(Class_A)"/>
    <property type="match status" value="1"/>
</dbReference>
<dbReference type="SUPFAM" id="SSF102114">
    <property type="entry name" value="Radical SAM enzymes"/>
    <property type="match status" value="1"/>
</dbReference>
<dbReference type="PROSITE" id="PS51918">
    <property type="entry name" value="RADICAL_SAM"/>
    <property type="match status" value="1"/>
</dbReference>
<name>RLMN_CAMFF</name>
<keyword id="KW-0004">4Fe-4S</keyword>
<keyword id="KW-0963">Cytoplasm</keyword>
<keyword id="KW-1015">Disulfide bond</keyword>
<keyword id="KW-0408">Iron</keyword>
<keyword id="KW-0411">Iron-sulfur</keyword>
<keyword id="KW-0479">Metal-binding</keyword>
<keyword id="KW-0489">Methyltransferase</keyword>
<keyword id="KW-0698">rRNA processing</keyword>
<keyword id="KW-0949">S-adenosyl-L-methionine</keyword>
<keyword id="KW-0808">Transferase</keyword>
<keyword id="KW-0819">tRNA processing</keyword>
<gene>
    <name evidence="1" type="primary">rlmN</name>
    <name type="ordered locus">CFF8240_1816</name>
</gene>
<sequence>MRNLLDLSQDELANLLSPKFRAKQIYEWVYKKNARSFDEMTNISKDVRENLKSEFYLDPLTCVRSETSKDGSIKYLFKLTDGKTIESVLLPMKEEISSEDGSVERHARYTICVSSQVGCKMGCSFCLTAKGGFVRNLSAGEIVAQILWIKRENNIPYERRVNVVYMGMGEPLDNLTNVSKAVSILKDNDGLAIGARRQTISTSGLASQIKKLGELDLGVLLAISLHAVTDELRAKLMPINKAYNIAAVMDAVRAFPIDMRKRVMFEYLIMDKVNDNLSDAKALVKLLHGIKAKVNLILFNPHEGSQYQRPSIENVDNFRTYLQSRGVTCTIRQSKGLDISAACGQLKERSKVEM</sequence>